<organism>
    <name type="scientific">Xenopus laevis</name>
    <name type="common">African clawed frog</name>
    <dbReference type="NCBI Taxonomy" id="8355"/>
    <lineage>
        <taxon>Eukaryota</taxon>
        <taxon>Metazoa</taxon>
        <taxon>Chordata</taxon>
        <taxon>Craniata</taxon>
        <taxon>Vertebrata</taxon>
        <taxon>Euteleostomi</taxon>
        <taxon>Amphibia</taxon>
        <taxon>Batrachia</taxon>
        <taxon>Anura</taxon>
        <taxon>Pipoidea</taxon>
        <taxon>Pipidae</taxon>
        <taxon>Xenopodinae</taxon>
        <taxon>Xenopus</taxon>
        <taxon>Xenopus</taxon>
    </lineage>
</organism>
<evidence type="ECO:0000250" key="1"/>
<evidence type="ECO:0000255" key="2"/>
<evidence type="ECO:0000305" key="3"/>
<gene>
    <name type="primary">psmc3-b</name>
    <name type="synonym">tbp10</name>
</gene>
<feature type="chain" id="PRO_0000084702" description="26S proteasome regulatory subunit 6A-B">
    <location>
        <begin position="1"/>
        <end position="404"/>
    </location>
</feature>
<feature type="binding site" evidence="2">
    <location>
        <begin position="192"/>
        <end position="199"/>
    </location>
    <ligand>
        <name>ATP</name>
        <dbReference type="ChEBI" id="CHEBI:30616"/>
    </ligand>
</feature>
<comment type="function">
    <text evidence="1">The 26S proteasome is involved in the ATP-dependent degradation of ubiquitinated proteins. The regulatory (or ATPase) complex confers ATP dependency and substrate specificity to the 26S complex (By similarity).</text>
</comment>
<comment type="subunit">
    <text>May form a heterodimer with a related family member.</text>
</comment>
<comment type="subcellular location">
    <subcellularLocation>
        <location evidence="3">Cytoplasm</location>
    </subcellularLocation>
    <subcellularLocation>
        <location evidence="3">Nucleus</location>
    </subcellularLocation>
</comment>
<comment type="similarity">
    <text evidence="3">Belongs to the AAA ATPase family.</text>
</comment>
<protein>
    <recommendedName>
        <fullName>26S proteasome regulatory subunit 6A-B</fullName>
    </recommendedName>
    <alternativeName>
        <fullName>26S proteasome AAA-ATPase subunit RPT5-B</fullName>
    </alternativeName>
    <alternativeName>
        <fullName>Proteasome 26S subunit ATPase 3-B</fullName>
    </alternativeName>
    <alternativeName>
        <fullName>Tat-binding protein 10</fullName>
        <shortName>TBP-10</shortName>
    </alternativeName>
</protein>
<dbReference type="EMBL" id="Y10460">
    <property type="protein sequence ID" value="CAA71486.1"/>
    <property type="molecule type" value="mRNA"/>
</dbReference>
<dbReference type="SMR" id="O42586"/>
<dbReference type="AGR" id="Xenbase:XB-GENE-1009853"/>
<dbReference type="Xenbase" id="XB-GENE-1009853">
    <property type="gene designation" value="psmc3.S"/>
</dbReference>
<dbReference type="Proteomes" id="UP000186698">
    <property type="component" value="Unplaced"/>
</dbReference>
<dbReference type="GO" id="GO:0005737">
    <property type="term" value="C:cytoplasm"/>
    <property type="evidence" value="ECO:0007669"/>
    <property type="project" value="UniProtKB-SubCell"/>
</dbReference>
<dbReference type="GO" id="GO:0005634">
    <property type="term" value="C:nucleus"/>
    <property type="evidence" value="ECO:0007669"/>
    <property type="project" value="UniProtKB-SubCell"/>
</dbReference>
<dbReference type="GO" id="GO:0022624">
    <property type="term" value="C:proteasome accessory complex"/>
    <property type="evidence" value="ECO:0000250"/>
    <property type="project" value="UniProtKB"/>
</dbReference>
<dbReference type="GO" id="GO:0008540">
    <property type="term" value="C:proteasome regulatory particle, base subcomplex"/>
    <property type="evidence" value="ECO:0000318"/>
    <property type="project" value="GO_Central"/>
</dbReference>
<dbReference type="GO" id="GO:0005524">
    <property type="term" value="F:ATP binding"/>
    <property type="evidence" value="ECO:0007669"/>
    <property type="project" value="UniProtKB-KW"/>
</dbReference>
<dbReference type="GO" id="GO:0016887">
    <property type="term" value="F:ATP hydrolysis activity"/>
    <property type="evidence" value="ECO:0007669"/>
    <property type="project" value="InterPro"/>
</dbReference>
<dbReference type="GO" id="GO:0036402">
    <property type="term" value="F:proteasome-activating activity"/>
    <property type="evidence" value="ECO:0000318"/>
    <property type="project" value="GO_Central"/>
</dbReference>
<dbReference type="GO" id="GO:0043161">
    <property type="term" value="P:proteasome-mediated ubiquitin-dependent protein catabolic process"/>
    <property type="evidence" value="ECO:0000318"/>
    <property type="project" value="GO_Central"/>
</dbReference>
<dbReference type="FunFam" id="1.10.8.60:FF:000009">
    <property type="entry name" value="26S protease regulatory subunit 6A"/>
    <property type="match status" value="1"/>
</dbReference>
<dbReference type="FunFam" id="2.40.50.140:FF:000076">
    <property type="entry name" value="26S protease regulatory subunit 6A"/>
    <property type="match status" value="1"/>
</dbReference>
<dbReference type="FunFam" id="3.40.50.300:FF:000037">
    <property type="entry name" value="26S protease regulatory subunit 6A"/>
    <property type="match status" value="1"/>
</dbReference>
<dbReference type="Gene3D" id="1.10.8.60">
    <property type="match status" value="1"/>
</dbReference>
<dbReference type="Gene3D" id="2.40.50.140">
    <property type="entry name" value="Nucleic acid-binding proteins"/>
    <property type="match status" value="1"/>
</dbReference>
<dbReference type="Gene3D" id="3.40.50.300">
    <property type="entry name" value="P-loop containing nucleotide triphosphate hydrolases"/>
    <property type="match status" value="1"/>
</dbReference>
<dbReference type="InterPro" id="IPR050221">
    <property type="entry name" value="26S_Proteasome_ATPase"/>
</dbReference>
<dbReference type="InterPro" id="IPR003593">
    <property type="entry name" value="AAA+_ATPase"/>
</dbReference>
<dbReference type="InterPro" id="IPR041569">
    <property type="entry name" value="AAA_lid_3"/>
</dbReference>
<dbReference type="InterPro" id="IPR003959">
    <property type="entry name" value="ATPase_AAA_core"/>
</dbReference>
<dbReference type="InterPro" id="IPR003960">
    <property type="entry name" value="ATPase_AAA_CS"/>
</dbReference>
<dbReference type="InterPro" id="IPR012340">
    <property type="entry name" value="NA-bd_OB-fold"/>
</dbReference>
<dbReference type="InterPro" id="IPR027417">
    <property type="entry name" value="P-loop_NTPase"/>
</dbReference>
<dbReference type="InterPro" id="IPR032501">
    <property type="entry name" value="Prot_ATP_ID_OB_2nd"/>
</dbReference>
<dbReference type="PANTHER" id="PTHR23073">
    <property type="entry name" value="26S PROTEASOME REGULATORY SUBUNIT"/>
    <property type="match status" value="1"/>
</dbReference>
<dbReference type="Pfam" id="PF00004">
    <property type="entry name" value="AAA"/>
    <property type="match status" value="1"/>
</dbReference>
<dbReference type="Pfam" id="PF17862">
    <property type="entry name" value="AAA_lid_3"/>
    <property type="match status" value="1"/>
</dbReference>
<dbReference type="Pfam" id="PF16450">
    <property type="entry name" value="Prot_ATP_ID_OB_C"/>
    <property type="match status" value="1"/>
</dbReference>
<dbReference type="SMART" id="SM00382">
    <property type="entry name" value="AAA"/>
    <property type="match status" value="1"/>
</dbReference>
<dbReference type="SUPFAM" id="SSF52540">
    <property type="entry name" value="P-loop containing nucleoside triphosphate hydrolases"/>
    <property type="match status" value="1"/>
</dbReference>
<dbReference type="PROSITE" id="PS00674">
    <property type="entry name" value="AAA"/>
    <property type="match status" value="1"/>
</dbReference>
<sequence length="404" mass="45276">MSTEEIIQRTRLLDSEIKIMKSEVLRVTHELQAMRDKIKENSEKIKVNKTLPYLVSNVIELLDVDPNDQEEDGANIDLDSQRKGKCAVIKTSTRQTYFLPVIGLVDAEKLKPGDLVGVNKDSYLILETLPTEYDSRVKAMEVDERPTEQYSDIGGLDKQIQELVEAIVLPMNHKEKFENLGIQPPKGVLMYGPPGTGKTLLARACAAQTKATFLKLAGPQLVQMFIGDGAKLVRDAFSLAKEKAPSIIFIDELDAIGNKRFDSEKAGDREVQRTMLELLNQLDGFQPTTQVKVIAATNRVDILDPALLRSGRLDRKIEFPMPNEEARARIMQIHSRKMNVSPDVNYEELARCTDDFNGAQCKAVCVEAGIIALRRGATELTHEDYMEGILEVQAKKKANLQYYA</sequence>
<proteinExistence type="evidence at transcript level"/>
<keyword id="KW-0067">ATP-binding</keyword>
<keyword id="KW-0963">Cytoplasm</keyword>
<keyword id="KW-0547">Nucleotide-binding</keyword>
<keyword id="KW-0539">Nucleus</keyword>
<keyword id="KW-0647">Proteasome</keyword>
<keyword id="KW-1185">Reference proteome</keyword>
<accession>O42586</accession>
<reference key="1">
    <citation type="journal article" date="1997" name="Biochim. Biophys. Acta">
        <title>Members of the AAA-gene family are involved in early embryogenesis of vertebrates.</title>
        <authorList>
            <person name="Nacken W."/>
        </authorList>
    </citation>
    <scope>NUCLEOTIDE SEQUENCE [MRNA]</scope>
    <source>
        <tissue>Ovary</tissue>
    </source>
</reference>
<name>PR6AB_XENLA</name>